<comment type="function">
    <text evidence="1">Specifically methylates guanosine-37 in various tRNAs.</text>
</comment>
<comment type="catalytic activity">
    <reaction evidence="1">
        <text>guanosine(37) in tRNA + S-adenosyl-L-methionine = N(1)-methylguanosine(37) in tRNA + S-adenosyl-L-homocysteine + H(+)</text>
        <dbReference type="Rhea" id="RHEA:36899"/>
        <dbReference type="Rhea" id="RHEA-COMP:10145"/>
        <dbReference type="Rhea" id="RHEA-COMP:10147"/>
        <dbReference type="ChEBI" id="CHEBI:15378"/>
        <dbReference type="ChEBI" id="CHEBI:57856"/>
        <dbReference type="ChEBI" id="CHEBI:59789"/>
        <dbReference type="ChEBI" id="CHEBI:73542"/>
        <dbReference type="ChEBI" id="CHEBI:74269"/>
        <dbReference type="EC" id="2.1.1.228"/>
    </reaction>
</comment>
<comment type="subunit">
    <text evidence="1">Homodimer.</text>
</comment>
<comment type="subcellular location">
    <subcellularLocation>
        <location evidence="1">Cytoplasm</location>
    </subcellularLocation>
</comment>
<comment type="similarity">
    <text evidence="1">Belongs to the RNA methyltransferase TrmD family.</text>
</comment>
<sequence length="245" mass="28056">MKIDYLTLFPEMFDGVLNHSIMKRAQENNKLQINTVNFRDYAINKHNQVDDYPYGGGQGMVLKPEPVFNAMEDLDVTEQTRVILMCPQGEPFSHQKAVELSKADHIVFICGHYEGYDERIRTHLVTDEISMGDYVLTGGELPAMTMTDAIVRLIPGVLGNEQSHQDDSFSDGLLEFPQYTRPREFKGLTVPDVLLSGNHANIDAWRHEQKLIRTYNKRPDLIEKYPLTNADKQILERYKIGLKKG</sequence>
<keyword id="KW-0963">Cytoplasm</keyword>
<keyword id="KW-0489">Methyltransferase</keyword>
<keyword id="KW-1185">Reference proteome</keyword>
<keyword id="KW-0949">S-adenosyl-L-methionine</keyword>
<keyword id="KW-0808">Transferase</keyword>
<keyword id="KW-0819">tRNA processing</keyword>
<feature type="chain" id="PRO_0000257474" description="tRNA (guanine-N(1)-)-methyltransferase">
    <location>
        <begin position="1"/>
        <end position="245"/>
    </location>
</feature>
<feature type="binding site" evidence="1">
    <location>
        <position position="111"/>
    </location>
    <ligand>
        <name>S-adenosyl-L-methionine</name>
        <dbReference type="ChEBI" id="CHEBI:59789"/>
    </ligand>
</feature>
<feature type="binding site" evidence="1">
    <location>
        <begin position="131"/>
        <end position="136"/>
    </location>
    <ligand>
        <name>S-adenosyl-L-methionine</name>
        <dbReference type="ChEBI" id="CHEBI:59789"/>
    </ligand>
</feature>
<accession>Q2FZ43</accession>
<reference key="1">
    <citation type="book" date="2006" name="Gram positive pathogens, 2nd edition">
        <title>The Staphylococcus aureus NCTC 8325 genome.</title>
        <editorList>
            <person name="Fischetti V."/>
            <person name="Novick R."/>
            <person name="Ferretti J."/>
            <person name="Portnoy D."/>
            <person name="Rood J."/>
        </editorList>
        <authorList>
            <person name="Gillaspy A.F."/>
            <person name="Worrell V."/>
            <person name="Orvis J."/>
            <person name="Roe B.A."/>
            <person name="Dyer D.W."/>
            <person name="Iandolo J.J."/>
        </authorList>
    </citation>
    <scope>NUCLEOTIDE SEQUENCE [LARGE SCALE GENOMIC DNA]</scope>
    <source>
        <strain>NCTC 8325 / PS 47</strain>
    </source>
</reference>
<name>TRMD_STAA8</name>
<evidence type="ECO:0000255" key="1">
    <source>
        <dbReference type="HAMAP-Rule" id="MF_00605"/>
    </source>
</evidence>
<protein>
    <recommendedName>
        <fullName evidence="1">tRNA (guanine-N(1)-)-methyltransferase</fullName>
        <ecNumber evidence="1">2.1.1.228</ecNumber>
    </recommendedName>
    <alternativeName>
        <fullName evidence="1">M1G-methyltransferase</fullName>
    </alternativeName>
    <alternativeName>
        <fullName evidence="1">tRNA [GM37] methyltransferase</fullName>
    </alternativeName>
</protein>
<gene>
    <name evidence="1" type="primary">trmD</name>
    <name type="ordered locus">SAOUHSC_01210</name>
</gene>
<organism>
    <name type="scientific">Staphylococcus aureus (strain NCTC 8325 / PS 47)</name>
    <dbReference type="NCBI Taxonomy" id="93061"/>
    <lineage>
        <taxon>Bacteria</taxon>
        <taxon>Bacillati</taxon>
        <taxon>Bacillota</taxon>
        <taxon>Bacilli</taxon>
        <taxon>Bacillales</taxon>
        <taxon>Staphylococcaceae</taxon>
        <taxon>Staphylococcus</taxon>
    </lineage>
</organism>
<dbReference type="EC" id="2.1.1.228" evidence="1"/>
<dbReference type="EMBL" id="CP000253">
    <property type="protein sequence ID" value="ABD30315.1"/>
    <property type="molecule type" value="Genomic_DNA"/>
</dbReference>
<dbReference type="RefSeq" id="WP_000687328.1">
    <property type="nucleotide sequence ID" value="NZ_LS483365.1"/>
</dbReference>
<dbReference type="RefSeq" id="YP_499747.1">
    <property type="nucleotide sequence ID" value="NC_007795.1"/>
</dbReference>
<dbReference type="SMR" id="Q2FZ43"/>
<dbReference type="STRING" id="93061.SAOUHSC_01210"/>
<dbReference type="BindingDB" id="Q2FZ43"/>
<dbReference type="ChEMBL" id="CHEMBL4523934"/>
<dbReference type="PaxDb" id="1280-SAXN108_1241"/>
<dbReference type="GeneID" id="3919476"/>
<dbReference type="KEGG" id="sao:SAOUHSC_01210"/>
<dbReference type="PATRIC" id="fig|93061.5.peg.1110"/>
<dbReference type="eggNOG" id="COG0336">
    <property type="taxonomic scope" value="Bacteria"/>
</dbReference>
<dbReference type="HOGENOM" id="CLU_047363_0_1_9"/>
<dbReference type="OrthoDB" id="9807416at2"/>
<dbReference type="PRO" id="PR:Q2FZ43"/>
<dbReference type="Proteomes" id="UP000008816">
    <property type="component" value="Chromosome"/>
</dbReference>
<dbReference type="GO" id="GO:0005829">
    <property type="term" value="C:cytosol"/>
    <property type="evidence" value="ECO:0000318"/>
    <property type="project" value="GO_Central"/>
</dbReference>
<dbReference type="GO" id="GO:0052906">
    <property type="term" value="F:tRNA (guanine(37)-N1)-methyltransferase activity"/>
    <property type="evidence" value="ECO:0000318"/>
    <property type="project" value="GO_Central"/>
</dbReference>
<dbReference type="GO" id="GO:0002939">
    <property type="term" value="P:tRNA N1-guanine methylation"/>
    <property type="evidence" value="ECO:0000318"/>
    <property type="project" value="GO_Central"/>
</dbReference>
<dbReference type="CDD" id="cd18080">
    <property type="entry name" value="TrmD-like"/>
    <property type="match status" value="1"/>
</dbReference>
<dbReference type="FunFam" id="1.10.1270.20:FF:000001">
    <property type="entry name" value="tRNA (guanine-N(1)-)-methyltransferase"/>
    <property type="match status" value="1"/>
</dbReference>
<dbReference type="FunFam" id="3.40.1280.10:FF:000001">
    <property type="entry name" value="tRNA (guanine-N(1)-)-methyltransferase"/>
    <property type="match status" value="1"/>
</dbReference>
<dbReference type="Gene3D" id="3.40.1280.10">
    <property type="match status" value="1"/>
</dbReference>
<dbReference type="Gene3D" id="1.10.1270.20">
    <property type="entry name" value="tRNA(m1g37)methyltransferase, domain 2"/>
    <property type="match status" value="1"/>
</dbReference>
<dbReference type="HAMAP" id="MF_00605">
    <property type="entry name" value="TrmD"/>
    <property type="match status" value="1"/>
</dbReference>
<dbReference type="InterPro" id="IPR029028">
    <property type="entry name" value="Alpha/beta_knot_MTases"/>
</dbReference>
<dbReference type="InterPro" id="IPR023148">
    <property type="entry name" value="tRNA_m1G_MeTrfase_C_sf"/>
</dbReference>
<dbReference type="InterPro" id="IPR002649">
    <property type="entry name" value="tRNA_m1G_MeTrfase_TrmD"/>
</dbReference>
<dbReference type="InterPro" id="IPR029026">
    <property type="entry name" value="tRNA_m1G_MTases_N"/>
</dbReference>
<dbReference type="InterPro" id="IPR016009">
    <property type="entry name" value="tRNA_MeTrfase_TRMD/TRM10"/>
</dbReference>
<dbReference type="NCBIfam" id="NF000648">
    <property type="entry name" value="PRK00026.1"/>
    <property type="match status" value="1"/>
</dbReference>
<dbReference type="NCBIfam" id="TIGR00088">
    <property type="entry name" value="trmD"/>
    <property type="match status" value="1"/>
</dbReference>
<dbReference type="PANTHER" id="PTHR46417">
    <property type="entry name" value="TRNA (GUANINE-N(1)-)-METHYLTRANSFERASE"/>
    <property type="match status" value="1"/>
</dbReference>
<dbReference type="PANTHER" id="PTHR46417:SF1">
    <property type="entry name" value="TRNA (GUANINE-N(1)-)-METHYLTRANSFERASE"/>
    <property type="match status" value="1"/>
</dbReference>
<dbReference type="Pfam" id="PF01746">
    <property type="entry name" value="tRNA_m1G_MT"/>
    <property type="match status" value="1"/>
</dbReference>
<dbReference type="PIRSF" id="PIRSF000386">
    <property type="entry name" value="tRNA_mtase"/>
    <property type="match status" value="1"/>
</dbReference>
<dbReference type="SUPFAM" id="SSF75217">
    <property type="entry name" value="alpha/beta knot"/>
    <property type="match status" value="1"/>
</dbReference>
<proteinExistence type="inferred from homology"/>